<evidence type="ECO:0000250" key="1"/>
<evidence type="ECO:0000250" key="2">
    <source>
        <dbReference type="UniProtKB" id="O95208"/>
    </source>
</evidence>
<evidence type="ECO:0000250" key="3">
    <source>
        <dbReference type="UniProtKB" id="Q8CHU3"/>
    </source>
</evidence>
<evidence type="ECO:0000255" key="4">
    <source>
        <dbReference type="PROSITE-ProRule" id="PRU00213"/>
    </source>
</evidence>
<evidence type="ECO:0000255" key="5">
    <source>
        <dbReference type="PROSITE-ProRule" id="PRU00243"/>
    </source>
</evidence>
<evidence type="ECO:0000256" key="6">
    <source>
        <dbReference type="SAM" id="MobiDB-lite"/>
    </source>
</evidence>
<evidence type="ECO:0000269" key="7">
    <source>
    </source>
</evidence>
<evidence type="ECO:0000269" key="8">
    <source>
    </source>
</evidence>
<evidence type="ECO:0000305" key="9"/>
<evidence type="ECO:0007744" key="10">
    <source>
    </source>
</evidence>
<feature type="chain" id="PRO_0000074518" description="Epsin-2">
    <location>
        <begin position="1"/>
        <end position="583"/>
    </location>
</feature>
<feature type="domain" description="ENTH" evidence="5">
    <location>
        <begin position="12"/>
        <end position="144"/>
    </location>
</feature>
<feature type="domain" description="UIM 1" evidence="4">
    <location>
        <begin position="218"/>
        <end position="237"/>
    </location>
</feature>
<feature type="domain" description="UIM 2" evidence="4">
    <location>
        <begin position="243"/>
        <end position="262"/>
    </location>
</feature>
<feature type="repeat" description="1">
    <location>
        <begin position="301"/>
        <end position="303"/>
    </location>
</feature>
<feature type="repeat" description="2">
    <location>
        <begin position="313"/>
        <end position="315"/>
    </location>
</feature>
<feature type="repeat" description="3">
    <location>
        <begin position="326"/>
        <end position="328"/>
    </location>
</feature>
<feature type="repeat" description="4">
    <location>
        <begin position="340"/>
        <end position="342"/>
    </location>
</feature>
<feature type="repeat" description="5">
    <location>
        <begin position="358"/>
        <end position="360"/>
    </location>
</feature>
<feature type="repeat" description="6">
    <location>
        <begin position="375"/>
        <end position="377"/>
    </location>
</feature>
<feature type="repeat" description="1">
    <location>
        <begin position="482"/>
        <end position="484"/>
    </location>
</feature>
<feature type="repeat" description="2">
    <location>
        <begin position="496"/>
        <end position="498"/>
    </location>
</feature>
<feature type="repeat" description="3">
    <location>
        <begin position="579"/>
        <end position="581"/>
    </location>
</feature>
<feature type="region of interest" description="Disordered" evidence="6">
    <location>
        <begin position="165"/>
        <end position="217"/>
    </location>
</feature>
<feature type="region of interest" description="Disordered" evidence="6">
    <location>
        <begin position="293"/>
        <end position="384"/>
    </location>
</feature>
<feature type="region of interest" description="6 X 3 AA repeats of [DE]-P-W">
    <location>
        <begin position="301"/>
        <end position="377"/>
    </location>
</feature>
<feature type="region of interest" description="Disordered" evidence="6">
    <location>
        <begin position="411"/>
        <end position="457"/>
    </location>
</feature>
<feature type="region of interest" description="3 X 3 AA repeats of N-P-F">
    <location>
        <begin position="482"/>
        <end position="581"/>
    </location>
</feature>
<feature type="compositionally biased region" description="Polar residues" evidence="6">
    <location>
        <begin position="165"/>
        <end position="181"/>
    </location>
</feature>
<feature type="compositionally biased region" description="Polar residues" evidence="6">
    <location>
        <begin position="197"/>
        <end position="216"/>
    </location>
</feature>
<feature type="compositionally biased region" description="Polar residues" evidence="6">
    <location>
        <begin position="301"/>
        <end position="315"/>
    </location>
</feature>
<feature type="compositionally biased region" description="Polar residues" evidence="6">
    <location>
        <begin position="346"/>
        <end position="355"/>
    </location>
</feature>
<feature type="compositionally biased region" description="Low complexity" evidence="6">
    <location>
        <begin position="437"/>
        <end position="448"/>
    </location>
</feature>
<feature type="binding site" evidence="1">
    <location>
        <position position="8"/>
    </location>
    <ligand>
        <name>a 1,2-diacyl-sn-glycero-3-phospho-(1D-myo-inositol-4,5-bisphosphate)</name>
        <dbReference type="ChEBI" id="CHEBI:58456"/>
    </ligand>
</feature>
<feature type="binding site" evidence="1">
    <location>
        <position position="11"/>
    </location>
    <ligand>
        <name>a 1,2-diacyl-sn-glycero-3-phospho-(1D-myo-inositol-4,5-bisphosphate)</name>
        <dbReference type="ChEBI" id="CHEBI:58456"/>
    </ligand>
</feature>
<feature type="binding site" evidence="1">
    <location>
        <position position="25"/>
    </location>
    <ligand>
        <name>a 1,2-diacyl-sn-glycero-3-phospho-(1D-myo-inositol-4,5-bisphosphate)</name>
        <dbReference type="ChEBI" id="CHEBI:58456"/>
    </ligand>
</feature>
<feature type="binding site" evidence="1">
    <location>
        <position position="30"/>
    </location>
    <ligand>
        <name>a 1,2-diacyl-sn-glycero-3-phospho-(1D-myo-inositol-4,5-bisphosphate)</name>
        <dbReference type="ChEBI" id="CHEBI:58456"/>
    </ligand>
</feature>
<feature type="binding site" evidence="1">
    <location>
        <position position="63"/>
    </location>
    <ligand>
        <name>a 1,2-diacyl-sn-glycero-3-phospho-(1D-myo-inositol-4,5-bisphosphate)</name>
        <dbReference type="ChEBI" id="CHEBI:58456"/>
    </ligand>
</feature>
<feature type="binding site" evidence="1">
    <location>
        <position position="73"/>
    </location>
    <ligand>
        <name>a 1,2-diacyl-sn-glycero-3-phospho-(1D-myo-inositol-4,5-bisphosphate)</name>
        <dbReference type="ChEBI" id="CHEBI:58456"/>
    </ligand>
</feature>
<feature type="modified residue" description="Omega-N-methylarginine" evidence="3">
    <location>
        <position position="170"/>
    </location>
</feature>
<feature type="modified residue" description="Phosphoserine" evidence="2">
    <location>
        <position position="173"/>
    </location>
</feature>
<feature type="modified residue" description="Phosphoserine" evidence="10">
    <location>
        <position position="192"/>
    </location>
</feature>
<feature type="modified residue" description="Phosphoserine" evidence="10">
    <location>
        <position position="195"/>
    </location>
</feature>
<feature type="modified residue" description="Phosphoserine" evidence="10">
    <location>
        <position position="431"/>
    </location>
</feature>
<feature type="modified residue" description="Phosphothreonine" evidence="10">
    <location>
        <position position="453"/>
    </location>
</feature>
<feature type="modified residue" description="Phosphoserine" evidence="2">
    <location>
        <position position="514"/>
    </location>
</feature>
<proteinExistence type="evidence at protein level"/>
<sequence>MTTSSIRRQMKNIVNSYSEAEIKVREATSNDPWGPSSSLMTEIADLTYNVVRFSEIMSMVWKRLNDHGKNWRHVYKALTLLDYLIKTGSERVAQQCRENIFAIQTLKDFQYIDRDGKDQGINVREKSKQLVALLKDEERLKVERVQALKTKERMAQVATGVGSNQITFGRGSSQPNLSISHSEQEYGKAGGSPASYHGSTSPRVSSELEQARPQTSGEEELQLQLALAMSREVAEQEERLRRGDDLRLQMALEESRRDTVKVPKKKEVKACCKPGSHSQQTTLLDLMDALPSSGPVAQKTEPWSTGTPANQTNPWGGTVAPANISDPWPSFGTKPAASVDPWGVPTTASIQSVPKNSDPWAASQQPASDAGKTADAWGAAKPSPASGSFELFSNFNGTVKDDFSEFDNLRTSKKPAESGASVPPQDSRTTSPDLFESQSLTSASSKPSSARKTPESFLGPNAALVNLDSLVTKPAPPAQSLNPFLAPGAAAPAPVNPFQVNQPQPLTLNQLRGSPVLGSSASFGSGPGVETVAPMPSVAPHSALGATGSSLTPLGPTAMNMVGSMGIPPSAAQPAGTTNPFLL</sequence>
<name>EPN2_RAT</name>
<comment type="function">
    <text evidence="7">Plays a role in the formation of clathrin-coated invaginations and endocytosis.</text>
</comment>
<comment type="subunit">
    <text evidence="2 3 7">Binds AP-2 and clathrin (By similarity). Interacts with ITSN1 (By similarity). Interacts with UBQLN2 (By similarity). Binds EPS15.</text>
</comment>
<comment type="subcellular location">
    <subcellularLocation>
        <location evidence="1">Cytoplasm</location>
    </subcellularLocation>
    <text evidence="1">In punctate structures throughout the cell and particularly concentrated in the region of the Golgi complex.</text>
</comment>
<comment type="tissue specificity">
    <text evidence="7">Highly expressed in brain. Detected at lower levels in lung, liver, muscle and testis.</text>
</comment>
<comment type="domain">
    <text>The NPF repeat domain is involved in EPS15 binding.</text>
</comment>
<comment type="domain">
    <text>The DPW repeat domain is involved in AP-2 and clathrin binding.</text>
</comment>
<comment type="PTM">
    <text evidence="8">Ubiquitinated.</text>
</comment>
<comment type="similarity">
    <text evidence="9">Belongs to the epsin family.</text>
</comment>
<protein>
    <recommendedName>
        <fullName>Epsin-2</fullName>
    </recommendedName>
    <alternativeName>
        <fullName>EPS-15-interacting protein 2</fullName>
    </alternativeName>
</protein>
<reference key="1">
    <citation type="journal article" date="1999" name="J. Biol. Chem.">
        <title>The epsins define a family of proteins that interact with components of the clathrin coat and contain a new protein module.</title>
        <authorList>
            <person name="Rosenthal J.A."/>
            <person name="Chen H."/>
            <person name="Slepnev V.I."/>
            <person name="Pellegrini L."/>
            <person name="Salcini A.E."/>
            <person name="Di Fiore P.P."/>
            <person name="De Camilli P."/>
        </authorList>
    </citation>
    <scope>NUCLEOTIDE SEQUENCE [MRNA]</scope>
    <scope>FUNCTION</scope>
    <scope>INTERACTION WITH EPS15</scope>
    <scope>TISSUE SPECIFICITY</scope>
    <source>
        <tissue>Brain</tissue>
    </source>
</reference>
<reference key="2">
    <citation type="journal article" date="2002" name="Nature">
        <title>A single motif responsible for ubiquitin recognition and monoubiquitination in endocytic proteins.</title>
        <authorList>
            <person name="Polo S."/>
            <person name="Sigismund S."/>
            <person name="Faretta M."/>
            <person name="Guidi M."/>
            <person name="Capua M.R."/>
            <person name="Bossi G."/>
            <person name="Chen H."/>
            <person name="De Camilli P."/>
            <person name="Di Fiore P.P."/>
        </authorList>
    </citation>
    <scope>UBIQUITINATION</scope>
</reference>
<reference key="3">
    <citation type="journal article" date="2012" name="Nat. Commun.">
        <title>Quantitative maps of protein phosphorylation sites across 14 different rat organs and tissues.</title>
        <authorList>
            <person name="Lundby A."/>
            <person name="Secher A."/>
            <person name="Lage K."/>
            <person name="Nordsborg N.B."/>
            <person name="Dmytriyev A."/>
            <person name="Lundby C."/>
            <person name="Olsen J.V."/>
        </authorList>
    </citation>
    <scope>PHOSPHORYLATION [LARGE SCALE ANALYSIS] AT SER-192; SER-195; SER-431 AND THR-453</scope>
    <scope>IDENTIFICATION BY MASS SPECTROMETRY [LARGE SCALE ANALYSIS]</scope>
</reference>
<accession>Q9Z1Z3</accession>
<gene>
    <name type="primary">Epn2</name>
</gene>
<organism>
    <name type="scientific">Rattus norvegicus</name>
    <name type="common">Rat</name>
    <dbReference type="NCBI Taxonomy" id="10116"/>
    <lineage>
        <taxon>Eukaryota</taxon>
        <taxon>Metazoa</taxon>
        <taxon>Chordata</taxon>
        <taxon>Craniata</taxon>
        <taxon>Vertebrata</taxon>
        <taxon>Euteleostomi</taxon>
        <taxon>Mammalia</taxon>
        <taxon>Eutheria</taxon>
        <taxon>Euarchontoglires</taxon>
        <taxon>Glires</taxon>
        <taxon>Rodentia</taxon>
        <taxon>Myomorpha</taxon>
        <taxon>Muroidea</taxon>
        <taxon>Muridae</taxon>
        <taxon>Murinae</taxon>
        <taxon>Rattus</taxon>
    </lineage>
</organism>
<keyword id="KW-0963">Cytoplasm</keyword>
<keyword id="KW-0254">Endocytosis</keyword>
<keyword id="KW-0446">Lipid-binding</keyword>
<keyword id="KW-0488">Methylation</keyword>
<keyword id="KW-0597">Phosphoprotein</keyword>
<keyword id="KW-1185">Reference proteome</keyword>
<keyword id="KW-0677">Repeat</keyword>
<keyword id="KW-0832">Ubl conjugation</keyword>
<dbReference type="EMBL" id="AF096269">
    <property type="protein sequence ID" value="AAC79495.1"/>
    <property type="molecule type" value="mRNA"/>
</dbReference>
<dbReference type="SMR" id="Q9Z1Z3"/>
<dbReference type="BioGRID" id="248836">
    <property type="interactions" value="2"/>
</dbReference>
<dbReference type="FunCoup" id="Q9Z1Z3">
    <property type="interactions" value="2401"/>
</dbReference>
<dbReference type="STRING" id="10116.ENSRNOP00000074461"/>
<dbReference type="GlyGen" id="Q9Z1Z3">
    <property type="glycosylation" value="1 site"/>
</dbReference>
<dbReference type="iPTMnet" id="Q9Z1Z3"/>
<dbReference type="jPOST" id="Q9Z1Z3"/>
<dbReference type="PaxDb" id="10116-ENSRNOP00000039386"/>
<dbReference type="UCSC" id="RGD:619773">
    <property type="organism name" value="rat"/>
</dbReference>
<dbReference type="AGR" id="RGD:619773"/>
<dbReference type="RGD" id="619773">
    <property type="gene designation" value="Epn2"/>
</dbReference>
<dbReference type="InParanoid" id="Q9Z1Z3"/>
<dbReference type="OrthoDB" id="4033880at2759"/>
<dbReference type="Reactome" id="R-RNO-8856825">
    <property type="pathway name" value="Cargo recognition for clathrin-mediated endocytosis"/>
</dbReference>
<dbReference type="Reactome" id="R-RNO-8856828">
    <property type="pathway name" value="Clathrin-mediated endocytosis"/>
</dbReference>
<dbReference type="PRO" id="PR:Q9Z1Z3"/>
<dbReference type="Proteomes" id="UP000002494">
    <property type="component" value="Unplaced"/>
</dbReference>
<dbReference type="GO" id="GO:0030128">
    <property type="term" value="C:clathrin coat of endocytic vesicle"/>
    <property type="evidence" value="ECO:0000314"/>
    <property type="project" value="RGD"/>
</dbReference>
<dbReference type="GO" id="GO:0030125">
    <property type="term" value="C:clathrin vesicle coat"/>
    <property type="evidence" value="ECO:0000318"/>
    <property type="project" value="GO_Central"/>
</dbReference>
<dbReference type="GO" id="GO:0005768">
    <property type="term" value="C:endosome"/>
    <property type="evidence" value="ECO:0000318"/>
    <property type="project" value="GO_Central"/>
</dbReference>
<dbReference type="GO" id="GO:0005886">
    <property type="term" value="C:plasma membrane"/>
    <property type="evidence" value="ECO:0000318"/>
    <property type="project" value="GO_Central"/>
</dbReference>
<dbReference type="GO" id="GO:0098843">
    <property type="term" value="C:postsynaptic endocytic zone"/>
    <property type="evidence" value="ECO:0000314"/>
    <property type="project" value="SynGO"/>
</dbReference>
<dbReference type="GO" id="GO:0030276">
    <property type="term" value="F:clathrin binding"/>
    <property type="evidence" value="ECO:0000318"/>
    <property type="project" value="GO_Central"/>
</dbReference>
<dbReference type="GO" id="GO:0005543">
    <property type="term" value="F:phospholipid binding"/>
    <property type="evidence" value="ECO:0000318"/>
    <property type="project" value="GO_Central"/>
</dbReference>
<dbReference type="GO" id="GO:0048568">
    <property type="term" value="P:embryonic organ development"/>
    <property type="evidence" value="ECO:0000266"/>
    <property type="project" value="RGD"/>
</dbReference>
<dbReference type="GO" id="GO:0006897">
    <property type="term" value="P:endocytosis"/>
    <property type="evidence" value="ECO:0000318"/>
    <property type="project" value="GO_Central"/>
</dbReference>
<dbReference type="GO" id="GO:0001701">
    <property type="term" value="P:in utero embryonic development"/>
    <property type="evidence" value="ECO:0000266"/>
    <property type="project" value="RGD"/>
</dbReference>
<dbReference type="GO" id="GO:1903671">
    <property type="term" value="P:negative regulation of sprouting angiogenesis"/>
    <property type="evidence" value="ECO:0000266"/>
    <property type="project" value="RGD"/>
</dbReference>
<dbReference type="GO" id="GO:0030948">
    <property type="term" value="P:negative regulation of vascular endothelial growth factor receptor signaling pathway"/>
    <property type="evidence" value="ECO:0000266"/>
    <property type="project" value="RGD"/>
</dbReference>
<dbReference type="GO" id="GO:0007219">
    <property type="term" value="P:Notch signaling pathway"/>
    <property type="evidence" value="ECO:0000266"/>
    <property type="project" value="RGD"/>
</dbReference>
<dbReference type="GO" id="GO:0045747">
    <property type="term" value="P:positive regulation of Notch signaling pathway"/>
    <property type="evidence" value="ECO:0000266"/>
    <property type="project" value="RGD"/>
</dbReference>
<dbReference type="GO" id="GO:0030100">
    <property type="term" value="P:regulation of endocytosis"/>
    <property type="evidence" value="ECO:0000314"/>
    <property type="project" value="RGD"/>
</dbReference>
<dbReference type="CDD" id="cd16990">
    <property type="entry name" value="ENTH_Epsin"/>
    <property type="match status" value="1"/>
</dbReference>
<dbReference type="FunFam" id="1.25.40.90:FF:000002">
    <property type="entry name" value="epsin-2 isoform X1"/>
    <property type="match status" value="1"/>
</dbReference>
<dbReference type="Gene3D" id="1.25.40.90">
    <property type="match status" value="1"/>
</dbReference>
<dbReference type="InterPro" id="IPR013809">
    <property type="entry name" value="ENTH"/>
</dbReference>
<dbReference type="InterPro" id="IPR008942">
    <property type="entry name" value="ENTH_VHS"/>
</dbReference>
<dbReference type="InterPro" id="IPR003903">
    <property type="entry name" value="UIM_dom"/>
</dbReference>
<dbReference type="PANTHER" id="PTHR12276:SF50">
    <property type="entry name" value="EPSIN-2"/>
    <property type="match status" value="1"/>
</dbReference>
<dbReference type="PANTHER" id="PTHR12276">
    <property type="entry name" value="EPSIN/ENT-RELATED"/>
    <property type="match status" value="1"/>
</dbReference>
<dbReference type="Pfam" id="PF01417">
    <property type="entry name" value="ENTH"/>
    <property type="match status" value="1"/>
</dbReference>
<dbReference type="SMART" id="SM00273">
    <property type="entry name" value="ENTH"/>
    <property type="match status" value="1"/>
</dbReference>
<dbReference type="SMART" id="SM00726">
    <property type="entry name" value="UIM"/>
    <property type="match status" value="2"/>
</dbReference>
<dbReference type="SUPFAM" id="SSF48464">
    <property type="entry name" value="ENTH/VHS domain"/>
    <property type="match status" value="1"/>
</dbReference>
<dbReference type="PROSITE" id="PS50942">
    <property type="entry name" value="ENTH"/>
    <property type="match status" value="1"/>
</dbReference>
<dbReference type="PROSITE" id="PS50330">
    <property type="entry name" value="UIM"/>
    <property type="match status" value="2"/>
</dbReference>